<proteinExistence type="inferred from homology"/>
<feature type="chain" id="PRO_1000076570" description="tRNA-specific 2-thiouridylase MnmA">
    <location>
        <begin position="1"/>
        <end position="371"/>
    </location>
</feature>
<feature type="region of interest" description="Interaction with target base in tRNA" evidence="1">
    <location>
        <begin position="102"/>
        <end position="104"/>
    </location>
</feature>
<feature type="region of interest" description="Interaction with tRNA" evidence="1">
    <location>
        <begin position="154"/>
        <end position="156"/>
    </location>
</feature>
<feature type="region of interest" description="Interaction with tRNA" evidence="1">
    <location>
        <begin position="316"/>
        <end position="317"/>
    </location>
</feature>
<feature type="active site" description="Nucleophile" evidence="1">
    <location>
        <position position="107"/>
    </location>
</feature>
<feature type="active site" description="Cysteine persulfide intermediate" evidence="1">
    <location>
        <position position="204"/>
    </location>
</feature>
<feature type="binding site" evidence="1">
    <location>
        <begin position="16"/>
        <end position="23"/>
    </location>
    <ligand>
        <name>ATP</name>
        <dbReference type="ChEBI" id="CHEBI:30616"/>
    </ligand>
</feature>
<feature type="binding site" evidence="1">
    <location>
        <position position="42"/>
    </location>
    <ligand>
        <name>ATP</name>
        <dbReference type="ChEBI" id="CHEBI:30616"/>
    </ligand>
</feature>
<feature type="binding site" evidence="1">
    <location>
        <position position="132"/>
    </location>
    <ligand>
        <name>ATP</name>
        <dbReference type="ChEBI" id="CHEBI:30616"/>
    </ligand>
</feature>
<feature type="site" description="Interaction with tRNA" evidence="1">
    <location>
        <position position="133"/>
    </location>
</feature>
<feature type="site" description="Interaction with tRNA" evidence="1">
    <location>
        <position position="349"/>
    </location>
</feature>
<feature type="disulfide bond" description="Alternate" evidence="1">
    <location>
        <begin position="107"/>
        <end position="204"/>
    </location>
</feature>
<name>MNMA_SHEHH</name>
<evidence type="ECO:0000255" key="1">
    <source>
        <dbReference type="HAMAP-Rule" id="MF_00144"/>
    </source>
</evidence>
<keyword id="KW-0067">ATP-binding</keyword>
<keyword id="KW-0963">Cytoplasm</keyword>
<keyword id="KW-1015">Disulfide bond</keyword>
<keyword id="KW-0547">Nucleotide-binding</keyword>
<keyword id="KW-0694">RNA-binding</keyword>
<keyword id="KW-0808">Transferase</keyword>
<keyword id="KW-0819">tRNA processing</keyword>
<keyword id="KW-0820">tRNA-binding</keyword>
<dbReference type="EC" id="2.8.1.13" evidence="1"/>
<dbReference type="EMBL" id="CP000931">
    <property type="protein sequence ID" value="ABZ76281.1"/>
    <property type="molecule type" value="Genomic_DNA"/>
</dbReference>
<dbReference type="RefSeq" id="WP_012276818.1">
    <property type="nucleotide sequence ID" value="NC_010334.1"/>
</dbReference>
<dbReference type="SMR" id="B0TQ02"/>
<dbReference type="STRING" id="458817.Shal_1715"/>
<dbReference type="KEGG" id="shl:Shal_1715"/>
<dbReference type="eggNOG" id="COG0482">
    <property type="taxonomic scope" value="Bacteria"/>
</dbReference>
<dbReference type="HOGENOM" id="CLU_035188_1_0_6"/>
<dbReference type="OrthoDB" id="9800696at2"/>
<dbReference type="Proteomes" id="UP000001317">
    <property type="component" value="Chromosome"/>
</dbReference>
<dbReference type="GO" id="GO:0005737">
    <property type="term" value="C:cytoplasm"/>
    <property type="evidence" value="ECO:0007669"/>
    <property type="project" value="UniProtKB-SubCell"/>
</dbReference>
<dbReference type="GO" id="GO:0005524">
    <property type="term" value="F:ATP binding"/>
    <property type="evidence" value="ECO:0007669"/>
    <property type="project" value="UniProtKB-KW"/>
</dbReference>
<dbReference type="GO" id="GO:0000049">
    <property type="term" value="F:tRNA binding"/>
    <property type="evidence" value="ECO:0007669"/>
    <property type="project" value="UniProtKB-KW"/>
</dbReference>
<dbReference type="GO" id="GO:0103016">
    <property type="term" value="F:tRNA-uridine 2-sulfurtransferase activity"/>
    <property type="evidence" value="ECO:0007669"/>
    <property type="project" value="UniProtKB-EC"/>
</dbReference>
<dbReference type="GO" id="GO:0002143">
    <property type="term" value="P:tRNA wobble position uridine thiolation"/>
    <property type="evidence" value="ECO:0007669"/>
    <property type="project" value="TreeGrafter"/>
</dbReference>
<dbReference type="CDD" id="cd01998">
    <property type="entry name" value="MnmA_TRMU-like"/>
    <property type="match status" value="1"/>
</dbReference>
<dbReference type="FunFam" id="2.30.30.280:FF:000001">
    <property type="entry name" value="tRNA-specific 2-thiouridylase MnmA"/>
    <property type="match status" value="1"/>
</dbReference>
<dbReference type="FunFam" id="2.40.30.10:FF:000023">
    <property type="entry name" value="tRNA-specific 2-thiouridylase MnmA"/>
    <property type="match status" value="1"/>
</dbReference>
<dbReference type="FunFam" id="3.40.50.620:FF:000004">
    <property type="entry name" value="tRNA-specific 2-thiouridylase MnmA"/>
    <property type="match status" value="1"/>
</dbReference>
<dbReference type="Gene3D" id="2.30.30.280">
    <property type="entry name" value="Adenine nucleotide alpha hydrolases-like domains"/>
    <property type="match status" value="1"/>
</dbReference>
<dbReference type="Gene3D" id="3.40.50.620">
    <property type="entry name" value="HUPs"/>
    <property type="match status" value="1"/>
</dbReference>
<dbReference type="Gene3D" id="2.40.30.10">
    <property type="entry name" value="Translation factors"/>
    <property type="match status" value="1"/>
</dbReference>
<dbReference type="HAMAP" id="MF_00144">
    <property type="entry name" value="tRNA_thiouridyl_MnmA"/>
    <property type="match status" value="1"/>
</dbReference>
<dbReference type="InterPro" id="IPR004506">
    <property type="entry name" value="MnmA-like"/>
</dbReference>
<dbReference type="InterPro" id="IPR046885">
    <property type="entry name" value="MnmA-like_C"/>
</dbReference>
<dbReference type="InterPro" id="IPR046884">
    <property type="entry name" value="MnmA-like_central"/>
</dbReference>
<dbReference type="InterPro" id="IPR023382">
    <property type="entry name" value="MnmA-like_central_sf"/>
</dbReference>
<dbReference type="InterPro" id="IPR014729">
    <property type="entry name" value="Rossmann-like_a/b/a_fold"/>
</dbReference>
<dbReference type="NCBIfam" id="NF001138">
    <property type="entry name" value="PRK00143.1"/>
    <property type="match status" value="1"/>
</dbReference>
<dbReference type="NCBIfam" id="TIGR00420">
    <property type="entry name" value="trmU"/>
    <property type="match status" value="1"/>
</dbReference>
<dbReference type="PANTHER" id="PTHR11933:SF5">
    <property type="entry name" value="MITOCHONDRIAL TRNA-SPECIFIC 2-THIOURIDYLASE 1"/>
    <property type="match status" value="1"/>
</dbReference>
<dbReference type="PANTHER" id="PTHR11933">
    <property type="entry name" value="TRNA 5-METHYLAMINOMETHYL-2-THIOURIDYLATE -METHYLTRANSFERASE"/>
    <property type="match status" value="1"/>
</dbReference>
<dbReference type="Pfam" id="PF03054">
    <property type="entry name" value="tRNA_Me_trans"/>
    <property type="match status" value="1"/>
</dbReference>
<dbReference type="Pfam" id="PF20258">
    <property type="entry name" value="tRNA_Me_trans_C"/>
    <property type="match status" value="1"/>
</dbReference>
<dbReference type="Pfam" id="PF20259">
    <property type="entry name" value="tRNA_Me_trans_M"/>
    <property type="match status" value="1"/>
</dbReference>
<dbReference type="SUPFAM" id="SSF52402">
    <property type="entry name" value="Adenine nucleotide alpha hydrolases-like"/>
    <property type="match status" value="1"/>
</dbReference>
<sequence>MTSIEPTHLGKKVIVGMSGGVDSSVSAYLLMKQGYQVEGLFMKNWEEDDTDEYCAAADDLKDAQAVCDKLGIKLHTVNFASEYWDNVFEYFLAEYKAGRTPNPDIMCNKEIKFKAFLEFADEILDADYIAMGHYVRRRDIDGTSQMLRGIDGNKDQSYFLYTLGHEQVARSLFPVGELEKSEVREIAKEMGLITHDKKDSTGICFIGERKFTDFLQTFLPAQPGNIETSEGEVIGTHQGLMYHTLGQRKGLGIGGLKNSNEDPWYVVEKDLVRNVLIVGQGGNHPRLMSNGLIANQLHWVDRKGPADGSNITVKTRYRQQDVPCRVTYDSDDILRVIFDEPVAAVTPGQSAVFYDGEICLGGGIIDALIRD</sequence>
<protein>
    <recommendedName>
        <fullName evidence="1">tRNA-specific 2-thiouridylase MnmA</fullName>
        <ecNumber evidence="1">2.8.1.13</ecNumber>
    </recommendedName>
</protein>
<reference key="1">
    <citation type="submission" date="2008-01" db="EMBL/GenBank/DDBJ databases">
        <title>Complete sequence of Shewanella halifaxensis HAW-EB4.</title>
        <authorList>
            <consortium name="US DOE Joint Genome Institute"/>
            <person name="Copeland A."/>
            <person name="Lucas S."/>
            <person name="Lapidus A."/>
            <person name="Glavina del Rio T."/>
            <person name="Dalin E."/>
            <person name="Tice H."/>
            <person name="Bruce D."/>
            <person name="Goodwin L."/>
            <person name="Pitluck S."/>
            <person name="Sims D."/>
            <person name="Brettin T."/>
            <person name="Detter J.C."/>
            <person name="Han C."/>
            <person name="Kuske C.R."/>
            <person name="Schmutz J."/>
            <person name="Larimer F."/>
            <person name="Land M."/>
            <person name="Hauser L."/>
            <person name="Kyrpides N."/>
            <person name="Kim E."/>
            <person name="Zhao J.-S."/>
            <person name="Richardson P."/>
        </authorList>
    </citation>
    <scope>NUCLEOTIDE SEQUENCE [LARGE SCALE GENOMIC DNA]</scope>
    <source>
        <strain>HAW-EB4</strain>
    </source>
</reference>
<organism>
    <name type="scientific">Shewanella halifaxensis (strain HAW-EB4)</name>
    <dbReference type="NCBI Taxonomy" id="458817"/>
    <lineage>
        <taxon>Bacteria</taxon>
        <taxon>Pseudomonadati</taxon>
        <taxon>Pseudomonadota</taxon>
        <taxon>Gammaproteobacteria</taxon>
        <taxon>Alteromonadales</taxon>
        <taxon>Shewanellaceae</taxon>
        <taxon>Shewanella</taxon>
    </lineage>
</organism>
<gene>
    <name evidence="1" type="primary">mnmA</name>
    <name type="synonym">trmU</name>
    <name type="ordered locus">Shal_1715</name>
</gene>
<accession>B0TQ02</accession>
<comment type="function">
    <text evidence="1">Catalyzes the 2-thiolation of uridine at the wobble position (U34) of tRNA, leading to the formation of s(2)U34.</text>
</comment>
<comment type="catalytic activity">
    <reaction evidence="1">
        <text>S-sulfanyl-L-cysteinyl-[protein] + uridine(34) in tRNA + AH2 + ATP = 2-thiouridine(34) in tRNA + L-cysteinyl-[protein] + A + AMP + diphosphate + H(+)</text>
        <dbReference type="Rhea" id="RHEA:47032"/>
        <dbReference type="Rhea" id="RHEA-COMP:10131"/>
        <dbReference type="Rhea" id="RHEA-COMP:11726"/>
        <dbReference type="Rhea" id="RHEA-COMP:11727"/>
        <dbReference type="Rhea" id="RHEA-COMP:11728"/>
        <dbReference type="ChEBI" id="CHEBI:13193"/>
        <dbReference type="ChEBI" id="CHEBI:15378"/>
        <dbReference type="ChEBI" id="CHEBI:17499"/>
        <dbReference type="ChEBI" id="CHEBI:29950"/>
        <dbReference type="ChEBI" id="CHEBI:30616"/>
        <dbReference type="ChEBI" id="CHEBI:33019"/>
        <dbReference type="ChEBI" id="CHEBI:61963"/>
        <dbReference type="ChEBI" id="CHEBI:65315"/>
        <dbReference type="ChEBI" id="CHEBI:87170"/>
        <dbReference type="ChEBI" id="CHEBI:456215"/>
        <dbReference type="EC" id="2.8.1.13"/>
    </reaction>
</comment>
<comment type="subcellular location">
    <subcellularLocation>
        <location evidence="1">Cytoplasm</location>
    </subcellularLocation>
</comment>
<comment type="similarity">
    <text evidence="1">Belongs to the MnmA/TRMU family.</text>
</comment>